<gene>
    <name type="ordered locus">At5g66660</name>
    <name type="ORF">MSN2.4</name>
</gene>
<keyword id="KW-0472">Membrane</keyword>
<keyword id="KW-1185">Reference proteome</keyword>
<keyword id="KW-0812">Transmembrane</keyword>
<keyword id="KW-1133">Transmembrane helix</keyword>
<feature type="chain" id="PRO_0000306891" description="UPF0496 protein At5g66660">
    <location>
        <begin position="1"/>
        <end position="398"/>
    </location>
</feature>
<feature type="transmembrane region" description="Helical" evidence="1">
    <location>
        <begin position="240"/>
        <end position="260"/>
    </location>
</feature>
<feature type="transmembrane region" description="Helical" evidence="1">
    <location>
        <begin position="263"/>
        <end position="283"/>
    </location>
</feature>
<reference key="1">
    <citation type="journal article" date="2000" name="DNA Res.">
        <title>Structural analysis of Arabidopsis thaliana chromosome 5. X. Sequence features of the regions of 3,076,755 bp covered by sixty P1 and TAC clones.</title>
        <authorList>
            <person name="Sato S."/>
            <person name="Nakamura Y."/>
            <person name="Kaneko T."/>
            <person name="Katoh T."/>
            <person name="Asamizu E."/>
            <person name="Kotani H."/>
            <person name="Tabata S."/>
        </authorList>
    </citation>
    <scope>NUCLEOTIDE SEQUENCE [LARGE SCALE GENOMIC DNA]</scope>
    <source>
        <strain>cv. Columbia</strain>
    </source>
</reference>
<reference key="2">
    <citation type="journal article" date="2017" name="Plant J.">
        <title>Araport11: a complete reannotation of the Arabidopsis thaliana reference genome.</title>
        <authorList>
            <person name="Cheng C.Y."/>
            <person name="Krishnakumar V."/>
            <person name="Chan A.P."/>
            <person name="Thibaud-Nissen F."/>
            <person name="Schobel S."/>
            <person name="Town C.D."/>
        </authorList>
    </citation>
    <scope>GENOME REANNOTATION</scope>
    <source>
        <strain>cv. Columbia</strain>
    </source>
</reference>
<reference key="3">
    <citation type="journal article" date="2006" name="Plant Biotechnol. J.">
        <title>Simultaneous high-throughput recombinational cloning of open reading frames in closed and open configurations.</title>
        <authorList>
            <person name="Underwood B.A."/>
            <person name="Vanderhaeghen R."/>
            <person name="Whitford R."/>
            <person name="Town C.D."/>
            <person name="Hilson P."/>
        </authorList>
    </citation>
    <scope>NUCLEOTIDE SEQUENCE [LARGE SCALE GENOMIC DNA]</scope>
    <source>
        <strain>cv. Columbia</strain>
    </source>
</reference>
<evidence type="ECO:0000255" key="1"/>
<evidence type="ECO:0000305" key="2"/>
<protein>
    <recommendedName>
        <fullName>UPF0496 protein At5g66660</fullName>
    </recommendedName>
</protein>
<organism>
    <name type="scientific">Arabidopsis thaliana</name>
    <name type="common">Mouse-ear cress</name>
    <dbReference type="NCBI Taxonomy" id="3702"/>
    <lineage>
        <taxon>Eukaryota</taxon>
        <taxon>Viridiplantae</taxon>
        <taxon>Streptophyta</taxon>
        <taxon>Embryophyta</taxon>
        <taxon>Tracheophyta</taxon>
        <taxon>Spermatophyta</taxon>
        <taxon>Magnoliopsida</taxon>
        <taxon>eudicotyledons</taxon>
        <taxon>Gunneridae</taxon>
        <taxon>Pentapetalae</taxon>
        <taxon>rosids</taxon>
        <taxon>malvids</taxon>
        <taxon>Brassicales</taxon>
        <taxon>Brassicaceae</taxon>
        <taxon>Camelineae</taxon>
        <taxon>Arabidopsis</taxon>
    </lineage>
</organism>
<proteinExistence type="evidence at transcript level"/>
<comment type="subcellular location">
    <subcellularLocation>
        <location evidence="2">Membrane</location>
        <topology evidence="2">Multi-pass membrane protein</topology>
    </subcellularLocation>
</comment>
<comment type="similarity">
    <text evidence="2">Belongs to the UPF0496 family.</text>
</comment>
<comment type="sequence caution" evidence="2">
    <conflict type="erroneous termination">
        <sequence resource="EMBL-CDS" id="ABK28300"/>
    </conflict>
    <text>Extended C-terminus.</text>
</comment>
<sequence length="398" mass="44954">MEFCGCLSELMNGESSSKRNGPSTLPVKEVRTDMRSKYSSDLSSYTSACKKDSNLKSFDSSLHQRTNIIITSLAARAETQSLNLDSLMEVYGFLLELNQNAVRVIIESREDVWKNKDLKSLVDVYFKSTSKTLDFCNTVENCVKRTEISQLIIRFAVKQFEAESVDTDLGGDKKKKKYTKTLEELNKFKAMGDPFDGELVTQFDSVYDQQVLFLEELRKQRRKLDKKQRNVKTLRTVSNVFFATAYVSVLVLSVVATTMSAPPVVCAVASGSTAPIEITGKWFSQMWKKYEKAVKRQRGLVLTMESRVQVNNEAMKNIRSDVDELRSWVSSILETVDFAVEREEEEEAMGLAMQGIKKHVDGFTEKMEEVGENAAKCSKFIALGRLLVLEHILGLPAN</sequence>
<accession>Q9LVR4</accession>
<accession>A0MFR6</accession>
<name>U496F_ARATH</name>
<dbReference type="EMBL" id="AB018119">
    <property type="protein sequence ID" value="BAA97272.1"/>
    <property type="molecule type" value="Genomic_DNA"/>
</dbReference>
<dbReference type="EMBL" id="CP002688">
    <property type="protein sequence ID" value="AED98247.1"/>
    <property type="molecule type" value="Genomic_DNA"/>
</dbReference>
<dbReference type="EMBL" id="DQ447112">
    <property type="protein sequence ID" value="ABE65589.1"/>
    <property type="molecule type" value="Genomic_DNA"/>
</dbReference>
<dbReference type="EMBL" id="DQ653393">
    <property type="protein sequence ID" value="ABK28300.1"/>
    <property type="status" value="ALT_SEQ"/>
    <property type="molecule type" value="Genomic_DNA"/>
</dbReference>
<dbReference type="RefSeq" id="NP_201467.1">
    <property type="nucleotide sequence ID" value="NM_126064.2"/>
</dbReference>
<dbReference type="SMR" id="Q9LVR4"/>
<dbReference type="BioGRID" id="22040">
    <property type="interactions" value="1"/>
</dbReference>
<dbReference type="IntAct" id="Q9LVR4">
    <property type="interactions" value="1"/>
</dbReference>
<dbReference type="STRING" id="3702.Q9LVR4"/>
<dbReference type="PaxDb" id="3702-AT5G66660.1"/>
<dbReference type="EnsemblPlants" id="AT5G66660.1">
    <property type="protein sequence ID" value="AT5G66660.1"/>
    <property type="gene ID" value="AT5G66660"/>
</dbReference>
<dbReference type="GeneID" id="836798"/>
<dbReference type="Gramene" id="AT5G66660.1">
    <property type="protein sequence ID" value="AT5G66660.1"/>
    <property type="gene ID" value="AT5G66660"/>
</dbReference>
<dbReference type="KEGG" id="ath:AT5G66660"/>
<dbReference type="Araport" id="AT5G66660"/>
<dbReference type="TAIR" id="AT5G66660"/>
<dbReference type="eggNOG" id="ENOG502QVAQ">
    <property type="taxonomic scope" value="Eukaryota"/>
</dbReference>
<dbReference type="HOGENOM" id="CLU_044778_0_0_1"/>
<dbReference type="InParanoid" id="Q9LVR4"/>
<dbReference type="OMA" id="KYYTSAC"/>
<dbReference type="PhylomeDB" id="Q9LVR4"/>
<dbReference type="PRO" id="PR:Q9LVR4"/>
<dbReference type="Proteomes" id="UP000006548">
    <property type="component" value="Chromosome 5"/>
</dbReference>
<dbReference type="ExpressionAtlas" id="Q9LVR4">
    <property type="expression patterns" value="baseline and differential"/>
</dbReference>
<dbReference type="GO" id="GO:0016020">
    <property type="term" value="C:membrane"/>
    <property type="evidence" value="ECO:0007669"/>
    <property type="project" value="UniProtKB-SubCell"/>
</dbReference>
<dbReference type="InterPro" id="IPR007749">
    <property type="entry name" value="DUF677"/>
</dbReference>
<dbReference type="PANTHER" id="PTHR31113:SF13">
    <property type="entry name" value="(RAPE) HYPOTHETICAL PROTEIN"/>
    <property type="match status" value="1"/>
</dbReference>
<dbReference type="PANTHER" id="PTHR31113">
    <property type="entry name" value="UPF0496 PROTEIN 3-RELATED"/>
    <property type="match status" value="1"/>
</dbReference>
<dbReference type="Pfam" id="PF05055">
    <property type="entry name" value="DUF677"/>
    <property type="match status" value="1"/>
</dbReference>